<comment type="function">
    <text evidence="1">Allows bacterial pathogens to use the host heme as an iron source. Catalyzes the oxidative degradation of the heme macrocyclic porphyrin ring to the biliverdin in the presence of a suitable electron donor such as ascorbate or NADPH--cytochrome P450 reductase, with subsequent release of free iron.</text>
</comment>
<comment type="catalytic activity">
    <reaction evidence="1">
        <text>heme b + 3 reduced [NADPH--hemoprotein reductase] + 3 O2 = biliverdin IXalpha + CO + Fe(2+) + 3 oxidized [NADPH--hemoprotein reductase] + 3 H2O + H(+)</text>
        <dbReference type="Rhea" id="RHEA:21764"/>
        <dbReference type="Rhea" id="RHEA-COMP:11964"/>
        <dbReference type="Rhea" id="RHEA-COMP:11965"/>
        <dbReference type="ChEBI" id="CHEBI:15377"/>
        <dbReference type="ChEBI" id="CHEBI:15378"/>
        <dbReference type="ChEBI" id="CHEBI:15379"/>
        <dbReference type="ChEBI" id="CHEBI:17245"/>
        <dbReference type="ChEBI" id="CHEBI:29033"/>
        <dbReference type="ChEBI" id="CHEBI:57618"/>
        <dbReference type="ChEBI" id="CHEBI:57991"/>
        <dbReference type="ChEBI" id="CHEBI:58210"/>
        <dbReference type="ChEBI" id="CHEBI:60344"/>
        <dbReference type="EC" id="1.14.14.18"/>
    </reaction>
</comment>
<comment type="subunit">
    <text evidence="1">Homodimer.</text>
</comment>
<comment type="subcellular location">
    <subcellularLocation>
        <location evidence="1">Cytoplasm</location>
    </subcellularLocation>
</comment>
<comment type="similarity">
    <text evidence="1">Belongs to the antibiotic biosynthesis monooxygenase family. Heme-degrading monooxygenase IsdG subfamily.</text>
</comment>
<protein>
    <recommendedName>
        <fullName evidence="1">Heme-degrading monooxygenase</fullName>
        <ecNumber evidence="1">1.14.14.18</ecNumber>
    </recommendedName>
    <alternativeName>
        <fullName evidence="1">Heme oxygenase</fullName>
    </alternativeName>
    <alternativeName>
        <fullName evidence="1">Iron-regulated surface determinant</fullName>
    </alternativeName>
    <alternativeName>
        <fullName evidence="1">Iron-responsive surface determinant</fullName>
    </alternativeName>
</protein>
<sequence length="107" mass="12302">MVIVANKTLIRKGEGHKLVKRFDKIGKIEMQKGFLGLEVLVNAKEKEVDEVTISTRWETKADFHAWTKSEAFREAHSGRNARPDYILGNEIEFYDVEVVRMPIAQAQ</sequence>
<proteinExistence type="inferred from homology"/>
<evidence type="ECO:0000255" key="1">
    <source>
        <dbReference type="HAMAP-Rule" id="MF_01272"/>
    </source>
</evidence>
<dbReference type="EC" id="1.14.14.18" evidence="1"/>
<dbReference type="EMBL" id="AP006627">
    <property type="protein sequence ID" value="BAD65958.1"/>
    <property type="molecule type" value="Genomic_DNA"/>
</dbReference>
<dbReference type="RefSeq" id="WP_011248264.1">
    <property type="nucleotide sequence ID" value="NC_006582.1"/>
</dbReference>
<dbReference type="SMR" id="Q5WCF2"/>
<dbReference type="STRING" id="66692.ABC3425"/>
<dbReference type="KEGG" id="bcl:ABC3425"/>
<dbReference type="eggNOG" id="COG2329">
    <property type="taxonomic scope" value="Bacteria"/>
</dbReference>
<dbReference type="HOGENOM" id="CLU_141544_2_1_9"/>
<dbReference type="OrthoDB" id="384737at2"/>
<dbReference type="Proteomes" id="UP000001168">
    <property type="component" value="Chromosome"/>
</dbReference>
<dbReference type="GO" id="GO:0005737">
    <property type="term" value="C:cytoplasm"/>
    <property type="evidence" value="ECO:0007669"/>
    <property type="project" value="UniProtKB-SubCell"/>
</dbReference>
<dbReference type="GO" id="GO:0020037">
    <property type="term" value="F:heme binding"/>
    <property type="evidence" value="ECO:0007669"/>
    <property type="project" value="UniProtKB-UniRule"/>
</dbReference>
<dbReference type="GO" id="GO:0004392">
    <property type="term" value="F:heme oxygenase (decyclizing) activity"/>
    <property type="evidence" value="ECO:0007669"/>
    <property type="project" value="UniProtKB-UniRule"/>
</dbReference>
<dbReference type="GO" id="GO:0005506">
    <property type="term" value="F:iron ion binding"/>
    <property type="evidence" value="ECO:0007669"/>
    <property type="project" value="UniProtKB-UniRule"/>
</dbReference>
<dbReference type="GO" id="GO:0042167">
    <property type="term" value="P:heme catabolic process"/>
    <property type="evidence" value="ECO:0007669"/>
    <property type="project" value="UniProtKB-UniRule"/>
</dbReference>
<dbReference type="GO" id="GO:0033212">
    <property type="term" value="P:iron import into cell"/>
    <property type="evidence" value="ECO:0007669"/>
    <property type="project" value="InterPro"/>
</dbReference>
<dbReference type="Gene3D" id="3.30.70.100">
    <property type="match status" value="1"/>
</dbReference>
<dbReference type="HAMAP" id="MF_01272">
    <property type="entry name" value="Heme_degrading_monooxygenase"/>
    <property type="match status" value="1"/>
</dbReference>
<dbReference type="InterPro" id="IPR007138">
    <property type="entry name" value="ABM_dom"/>
</dbReference>
<dbReference type="InterPro" id="IPR011008">
    <property type="entry name" value="Dimeric_a/b-barrel"/>
</dbReference>
<dbReference type="InterPro" id="IPR050404">
    <property type="entry name" value="Heme-degrading_MO"/>
</dbReference>
<dbReference type="InterPro" id="IPR023953">
    <property type="entry name" value="IsdG"/>
</dbReference>
<dbReference type="NCBIfam" id="NF009839">
    <property type="entry name" value="PRK13314.1"/>
    <property type="match status" value="1"/>
</dbReference>
<dbReference type="PANTHER" id="PTHR34474:SF4">
    <property type="entry name" value="HEME OXYGENASE (STAPHYLOBILIN-PRODUCING) 1"/>
    <property type="match status" value="1"/>
</dbReference>
<dbReference type="PANTHER" id="PTHR34474">
    <property type="entry name" value="SIGNAL TRANSDUCTION PROTEIN TRAP"/>
    <property type="match status" value="1"/>
</dbReference>
<dbReference type="Pfam" id="PF03992">
    <property type="entry name" value="ABM"/>
    <property type="match status" value="1"/>
</dbReference>
<dbReference type="SUPFAM" id="SSF54909">
    <property type="entry name" value="Dimeric alpha+beta barrel"/>
    <property type="match status" value="1"/>
</dbReference>
<dbReference type="PROSITE" id="PS51725">
    <property type="entry name" value="ABM"/>
    <property type="match status" value="1"/>
</dbReference>
<keyword id="KW-0963">Cytoplasm</keyword>
<keyword id="KW-0349">Heme</keyword>
<keyword id="KW-0408">Iron</keyword>
<keyword id="KW-0479">Metal-binding</keyword>
<keyword id="KW-0503">Monooxygenase</keyword>
<keyword id="KW-0560">Oxidoreductase</keyword>
<keyword id="KW-1185">Reference proteome</keyword>
<accession>Q5WCF2</accession>
<gene>
    <name evidence="1" type="primary">isdG</name>
    <name type="ordered locus">ABC3425</name>
</gene>
<feature type="chain" id="PRO_0000270074" description="Heme-degrading monooxygenase">
    <location>
        <begin position="1"/>
        <end position="107"/>
    </location>
</feature>
<feature type="domain" description="ABM" evidence="1">
    <location>
        <begin position="2"/>
        <end position="93"/>
    </location>
</feature>
<feature type="binding site" evidence="1">
    <location>
        <position position="6"/>
    </location>
    <ligand>
        <name>Fe cation</name>
        <dbReference type="ChEBI" id="CHEBI:24875"/>
    </ligand>
</feature>
<feature type="binding site" description="axial binding residue" evidence="1">
    <location>
        <position position="76"/>
    </location>
    <ligand>
        <name>heme</name>
        <dbReference type="ChEBI" id="CHEBI:30413"/>
    </ligand>
    <ligandPart>
        <name>Fe</name>
        <dbReference type="ChEBI" id="CHEBI:18248"/>
    </ligandPart>
</feature>
<feature type="site" description="Transition state stabilizer" evidence="1">
    <location>
        <position position="66"/>
    </location>
</feature>
<organism>
    <name type="scientific">Shouchella clausii (strain KSM-K16)</name>
    <name type="common">Alkalihalobacillus clausii</name>
    <dbReference type="NCBI Taxonomy" id="66692"/>
    <lineage>
        <taxon>Bacteria</taxon>
        <taxon>Bacillati</taxon>
        <taxon>Bacillota</taxon>
        <taxon>Bacilli</taxon>
        <taxon>Bacillales</taxon>
        <taxon>Bacillaceae</taxon>
        <taxon>Shouchella</taxon>
    </lineage>
</organism>
<reference key="1">
    <citation type="submission" date="2003-10" db="EMBL/GenBank/DDBJ databases">
        <title>The complete genome sequence of the alkaliphilic Bacillus clausii KSM-K16.</title>
        <authorList>
            <person name="Takaki Y."/>
            <person name="Kageyama Y."/>
            <person name="Shimamura S."/>
            <person name="Suzuki H."/>
            <person name="Nishi S."/>
            <person name="Hatada Y."/>
            <person name="Kawai S."/>
            <person name="Ito S."/>
            <person name="Horikoshi K."/>
        </authorList>
    </citation>
    <scope>NUCLEOTIDE SEQUENCE [LARGE SCALE GENOMIC DNA]</scope>
    <source>
        <strain>KSM-K16</strain>
    </source>
</reference>
<name>HDOX_SHOC1</name>